<gene>
    <name evidence="1" type="primary">engB</name>
    <name type="ordered locus">CbuK_0233</name>
</gene>
<dbReference type="EMBL" id="CP001020">
    <property type="protein sequence ID" value="ACJ19545.1"/>
    <property type="molecule type" value="Genomic_DNA"/>
</dbReference>
<dbReference type="RefSeq" id="WP_005770381.1">
    <property type="nucleotide sequence ID" value="NC_011528.1"/>
</dbReference>
<dbReference type="SMR" id="B6J4E1"/>
<dbReference type="KEGG" id="cbc:CbuK_0233"/>
<dbReference type="HOGENOM" id="CLU_033732_1_0_6"/>
<dbReference type="GO" id="GO:0005829">
    <property type="term" value="C:cytosol"/>
    <property type="evidence" value="ECO:0007669"/>
    <property type="project" value="TreeGrafter"/>
</dbReference>
<dbReference type="GO" id="GO:0005525">
    <property type="term" value="F:GTP binding"/>
    <property type="evidence" value="ECO:0007669"/>
    <property type="project" value="UniProtKB-UniRule"/>
</dbReference>
<dbReference type="GO" id="GO:0046872">
    <property type="term" value="F:metal ion binding"/>
    <property type="evidence" value="ECO:0007669"/>
    <property type="project" value="UniProtKB-KW"/>
</dbReference>
<dbReference type="GO" id="GO:0000917">
    <property type="term" value="P:division septum assembly"/>
    <property type="evidence" value="ECO:0007669"/>
    <property type="project" value="UniProtKB-KW"/>
</dbReference>
<dbReference type="CDD" id="cd01876">
    <property type="entry name" value="YihA_EngB"/>
    <property type="match status" value="1"/>
</dbReference>
<dbReference type="FunFam" id="3.40.50.300:FF:000098">
    <property type="entry name" value="Probable GTP-binding protein EngB"/>
    <property type="match status" value="1"/>
</dbReference>
<dbReference type="Gene3D" id="3.40.50.300">
    <property type="entry name" value="P-loop containing nucleotide triphosphate hydrolases"/>
    <property type="match status" value="1"/>
</dbReference>
<dbReference type="HAMAP" id="MF_00321">
    <property type="entry name" value="GTPase_EngB"/>
    <property type="match status" value="1"/>
</dbReference>
<dbReference type="InterPro" id="IPR030393">
    <property type="entry name" value="G_ENGB_dom"/>
</dbReference>
<dbReference type="InterPro" id="IPR006073">
    <property type="entry name" value="GTP-bd"/>
</dbReference>
<dbReference type="InterPro" id="IPR019987">
    <property type="entry name" value="GTP-bd_ribosome_bio_YsxC"/>
</dbReference>
<dbReference type="InterPro" id="IPR027417">
    <property type="entry name" value="P-loop_NTPase"/>
</dbReference>
<dbReference type="NCBIfam" id="TIGR03598">
    <property type="entry name" value="GTPase_YsxC"/>
    <property type="match status" value="1"/>
</dbReference>
<dbReference type="PANTHER" id="PTHR11649:SF13">
    <property type="entry name" value="ENGB-TYPE G DOMAIN-CONTAINING PROTEIN"/>
    <property type="match status" value="1"/>
</dbReference>
<dbReference type="PANTHER" id="PTHR11649">
    <property type="entry name" value="MSS1/TRME-RELATED GTP-BINDING PROTEIN"/>
    <property type="match status" value="1"/>
</dbReference>
<dbReference type="Pfam" id="PF01926">
    <property type="entry name" value="MMR_HSR1"/>
    <property type="match status" value="1"/>
</dbReference>
<dbReference type="SUPFAM" id="SSF52540">
    <property type="entry name" value="P-loop containing nucleoside triphosphate hydrolases"/>
    <property type="match status" value="1"/>
</dbReference>
<dbReference type="PROSITE" id="PS51706">
    <property type="entry name" value="G_ENGB"/>
    <property type="match status" value="1"/>
</dbReference>
<proteinExistence type="inferred from homology"/>
<feature type="chain" id="PRO_1000115966" description="Probable GTP-binding protein EngB">
    <location>
        <begin position="1"/>
        <end position="205"/>
    </location>
</feature>
<feature type="domain" description="EngB-type G" evidence="1">
    <location>
        <begin position="29"/>
        <end position="203"/>
    </location>
</feature>
<feature type="binding site" evidence="1">
    <location>
        <begin position="37"/>
        <end position="44"/>
    </location>
    <ligand>
        <name>GTP</name>
        <dbReference type="ChEBI" id="CHEBI:37565"/>
    </ligand>
</feature>
<feature type="binding site" evidence="1">
    <location>
        <position position="44"/>
    </location>
    <ligand>
        <name>Mg(2+)</name>
        <dbReference type="ChEBI" id="CHEBI:18420"/>
    </ligand>
</feature>
<feature type="binding site" evidence="1">
    <location>
        <begin position="64"/>
        <end position="68"/>
    </location>
    <ligand>
        <name>GTP</name>
        <dbReference type="ChEBI" id="CHEBI:37565"/>
    </ligand>
</feature>
<feature type="binding site" evidence="1">
    <location>
        <position position="66"/>
    </location>
    <ligand>
        <name>Mg(2+)</name>
        <dbReference type="ChEBI" id="CHEBI:18420"/>
    </ligand>
</feature>
<feature type="binding site" evidence="1">
    <location>
        <begin position="82"/>
        <end position="85"/>
    </location>
    <ligand>
        <name>GTP</name>
        <dbReference type="ChEBI" id="CHEBI:37565"/>
    </ligand>
</feature>
<feature type="binding site" evidence="1">
    <location>
        <begin position="149"/>
        <end position="152"/>
    </location>
    <ligand>
        <name>GTP</name>
        <dbReference type="ChEBI" id="CHEBI:37565"/>
    </ligand>
</feature>
<feature type="binding site" evidence="1">
    <location>
        <begin position="182"/>
        <end position="184"/>
    </location>
    <ligand>
        <name>GTP</name>
        <dbReference type="ChEBI" id="CHEBI:37565"/>
    </ligand>
</feature>
<comment type="function">
    <text evidence="1">Necessary for normal cell division and for the maintenance of normal septation.</text>
</comment>
<comment type="cofactor">
    <cofactor evidence="1">
        <name>Mg(2+)</name>
        <dbReference type="ChEBI" id="CHEBI:18420"/>
    </cofactor>
</comment>
<comment type="similarity">
    <text evidence="1">Belongs to the TRAFAC class TrmE-Era-EngA-EngB-Septin-like GTPase superfamily. EngB GTPase family.</text>
</comment>
<keyword id="KW-0131">Cell cycle</keyword>
<keyword id="KW-0132">Cell division</keyword>
<keyword id="KW-0342">GTP-binding</keyword>
<keyword id="KW-0460">Magnesium</keyword>
<keyword id="KW-0479">Metal-binding</keyword>
<keyword id="KW-0547">Nucleotide-binding</keyword>
<keyword id="KW-0717">Septation</keyword>
<sequence>MTEFESAPAYQEAKYLTSAAEFDQLPPDQGAEIAFIGRSNAGKSSALNIITGIKGLARTSKTPGRTQMINFFALNEHERLVDLPGYGYAKVPRMVQKRWEELVDSYLKKRRCLKGLVVVMDIRHPLKEVDEDVIEWAVNYDIPIHILLTKSDKLSQNAAKKTLGEVQTAISAYGEKLTLQLFSSHDRTGLDEVKAVLSQWFSSEP</sequence>
<evidence type="ECO:0000255" key="1">
    <source>
        <dbReference type="HAMAP-Rule" id="MF_00321"/>
    </source>
</evidence>
<name>ENGB_COXB1</name>
<reference key="1">
    <citation type="journal article" date="2009" name="Infect. Immun.">
        <title>Comparative genomics reveal extensive transposon-mediated genomic plasticity and diversity among potential effector proteins within the genus Coxiella.</title>
        <authorList>
            <person name="Beare P.A."/>
            <person name="Unsworth N."/>
            <person name="Andoh M."/>
            <person name="Voth D.E."/>
            <person name="Omsland A."/>
            <person name="Gilk S.D."/>
            <person name="Williams K.P."/>
            <person name="Sobral B.W."/>
            <person name="Kupko J.J. III"/>
            <person name="Porcella S.F."/>
            <person name="Samuel J.E."/>
            <person name="Heinzen R.A."/>
        </authorList>
    </citation>
    <scope>NUCLEOTIDE SEQUENCE [LARGE SCALE GENOMIC DNA]</scope>
    <source>
        <strain>CbuK_Q154</strain>
    </source>
</reference>
<accession>B6J4E1</accession>
<protein>
    <recommendedName>
        <fullName evidence="1">Probable GTP-binding protein EngB</fullName>
    </recommendedName>
</protein>
<organism>
    <name type="scientific">Coxiella burnetii (strain CbuK_Q154)</name>
    <name type="common">Coxiella burnetii (strain Q154)</name>
    <dbReference type="NCBI Taxonomy" id="434924"/>
    <lineage>
        <taxon>Bacteria</taxon>
        <taxon>Pseudomonadati</taxon>
        <taxon>Pseudomonadota</taxon>
        <taxon>Gammaproteobacteria</taxon>
        <taxon>Legionellales</taxon>
        <taxon>Coxiellaceae</taxon>
        <taxon>Coxiella</taxon>
    </lineage>
</organism>